<keyword id="KW-0002">3D-structure</keyword>
<keyword id="KW-0007">Acetylation</keyword>
<keyword id="KW-0903">Direct protein sequencing</keyword>
<keyword id="KW-0349">Heme</keyword>
<keyword id="KW-0408">Iron</keyword>
<keyword id="KW-0479">Metal-binding</keyword>
<keyword id="KW-0561">Oxygen transport</keyword>
<keyword id="KW-0597">Phosphoprotein</keyword>
<keyword id="KW-1185">Reference proteome</keyword>
<keyword id="KW-0702">S-nitrosylation</keyword>
<keyword id="KW-0813">Transport</keyword>
<sequence length="147" mass="16133">MVHLSSEEKSAVTALWGKVNVEEVGGEALGRLLVVYPWTQRFFESFGDLSSANAVMNNPKVKAHGKKVLAAFSEGLSHLDNLKGTFAKLSELHCDKLHVDPENFRLLGNVLVIVLSHHFGKEFTPQVQAAYQKVVAGVANALAHKYH</sequence>
<name>HBB_RABIT</name>
<comment type="function">
    <text>Involved in oxygen transport from the lung to the various peripheral tissues.</text>
</comment>
<comment type="subunit">
    <text>Heterotetramer of two alpha chains and two beta chains.</text>
</comment>
<comment type="tissue specificity">
    <text>Red blood cells.</text>
</comment>
<comment type="polymorphism">
    <text evidence="6">There are two alleles. The sequence shown is that of beta-1; the most frequent of the two common alleles.</text>
</comment>
<comment type="similarity">
    <text evidence="3">Belongs to the globin family.</text>
</comment>
<organism>
    <name type="scientific">Oryctolagus cuniculus</name>
    <name type="common">Rabbit</name>
    <dbReference type="NCBI Taxonomy" id="9986"/>
    <lineage>
        <taxon>Eukaryota</taxon>
        <taxon>Metazoa</taxon>
        <taxon>Chordata</taxon>
        <taxon>Craniata</taxon>
        <taxon>Vertebrata</taxon>
        <taxon>Euteleostomi</taxon>
        <taxon>Mammalia</taxon>
        <taxon>Eutheria</taxon>
        <taxon>Euarchontoglires</taxon>
        <taxon>Glires</taxon>
        <taxon>Lagomorpha</taxon>
        <taxon>Leporidae</taxon>
        <taxon>Oryctolagus</taxon>
    </lineage>
</organism>
<dbReference type="EMBL" id="J00660">
    <property type="protein sequence ID" value="AAA31274.1"/>
    <property type="molecule type" value="Genomic_DNA"/>
</dbReference>
<dbReference type="EMBL" id="V00882">
    <property type="protein sequence ID" value="CAA24251.1"/>
    <property type="molecule type" value="Genomic_DNA"/>
</dbReference>
<dbReference type="EMBL" id="M18818">
    <property type="protein sequence ID" value="AAA02985.1"/>
    <property type="molecule type" value="Unassigned_DNA"/>
</dbReference>
<dbReference type="EMBL" id="V00878">
    <property type="protein sequence ID" value="CAA24247.1"/>
    <property type="molecule type" value="Genomic_DNA"/>
</dbReference>
<dbReference type="EMBL" id="V00879">
    <property type="protein sequence ID" value="CAA24248.1"/>
    <property type="molecule type" value="mRNA"/>
</dbReference>
<dbReference type="EMBL" id="M10843">
    <property type="protein sequence ID" value="AAA31270.1"/>
    <property type="molecule type" value="mRNA"/>
</dbReference>
<dbReference type="EMBL" id="K03256">
    <property type="protein sequence ID" value="AAA31277.1"/>
    <property type="molecule type" value="Genomic_DNA"/>
</dbReference>
<dbReference type="EMBL" id="M10525">
    <property type="protein sequence ID" value="AAA31268.1"/>
    <property type="molecule type" value="mRNA"/>
</dbReference>
<dbReference type="EMBL" id="M10831">
    <property type="protein sequence ID" value="AAA31271.1"/>
    <property type="molecule type" value="Genomic_DNA"/>
</dbReference>
<dbReference type="EMBL" id="J00659">
    <property type="protein sequence ID" value="AAA31273.1"/>
    <property type="molecule type" value="Genomic_DNA"/>
</dbReference>
<dbReference type="EMBL" id="M10833">
    <property type="protein sequence ID" value="AAA31272.1"/>
    <property type="molecule type" value="Genomic_DNA"/>
</dbReference>
<dbReference type="EMBL" id="M10832">
    <property type="protein sequence ID" value="AAA31272.1"/>
    <property type="status" value="JOINED"/>
    <property type="molecule type" value="Genomic_DNA"/>
</dbReference>
<dbReference type="PIR" id="I46476">
    <property type="entry name" value="HBRB"/>
</dbReference>
<dbReference type="RefSeq" id="NP_001075729.2">
    <property type="nucleotide sequence ID" value="NM_001082260.3"/>
</dbReference>
<dbReference type="PDB" id="2RAO">
    <property type="method" value="X-ray"/>
    <property type="resolution" value="2.00 A"/>
    <property type="chains" value="B/D=2-147"/>
</dbReference>
<dbReference type="PDBsum" id="2RAO"/>
<dbReference type="SMR" id="P02057"/>
<dbReference type="FunCoup" id="P02057">
    <property type="interactions" value="13"/>
</dbReference>
<dbReference type="PaxDb" id="9986-ENSOCUP00000000491"/>
<dbReference type="GeneID" id="100009084"/>
<dbReference type="KEGG" id="ocu:100009084"/>
<dbReference type="CTD" id="100009084"/>
<dbReference type="eggNOG" id="KOG3378">
    <property type="taxonomic scope" value="Eukaryota"/>
</dbReference>
<dbReference type="InParanoid" id="P02057"/>
<dbReference type="OrthoDB" id="9886081at2759"/>
<dbReference type="TreeFam" id="TF333268"/>
<dbReference type="EvolutionaryTrace" id="P02057"/>
<dbReference type="Proteomes" id="UP000001811">
    <property type="component" value="Unplaced"/>
</dbReference>
<dbReference type="GO" id="GO:0072562">
    <property type="term" value="C:blood microparticle"/>
    <property type="evidence" value="ECO:0007669"/>
    <property type="project" value="TreeGrafter"/>
</dbReference>
<dbReference type="GO" id="GO:0031838">
    <property type="term" value="C:haptoglobin-hemoglobin complex"/>
    <property type="evidence" value="ECO:0007669"/>
    <property type="project" value="TreeGrafter"/>
</dbReference>
<dbReference type="GO" id="GO:0005833">
    <property type="term" value="C:hemoglobin complex"/>
    <property type="evidence" value="ECO:0007669"/>
    <property type="project" value="InterPro"/>
</dbReference>
<dbReference type="GO" id="GO:0031720">
    <property type="term" value="F:haptoglobin binding"/>
    <property type="evidence" value="ECO:0007669"/>
    <property type="project" value="TreeGrafter"/>
</dbReference>
<dbReference type="GO" id="GO:0020037">
    <property type="term" value="F:heme binding"/>
    <property type="evidence" value="ECO:0007669"/>
    <property type="project" value="InterPro"/>
</dbReference>
<dbReference type="GO" id="GO:0031721">
    <property type="term" value="F:hemoglobin alpha binding"/>
    <property type="evidence" value="ECO:0007669"/>
    <property type="project" value="TreeGrafter"/>
</dbReference>
<dbReference type="GO" id="GO:0046872">
    <property type="term" value="F:metal ion binding"/>
    <property type="evidence" value="ECO:0007669"/>
    <property type="project" value="UniProtKB-KW"/>
</dbReference>
<dbReference type="GO" id="GO:0043177">
    <property type="term" value="F:organic acid binding"/>
    <property type="evidence" value="ECO:0007669"/>
    <property type="project" value="TreeGrafter"/>
</dbReference>
<dbReference type="GO" id="GO:0019825">
    <property type="term" value="F:oxygen binding"/>
    <property type="evidence" value="ECO:0007669"/>
    <property type="project" value="InterPro"/>
</dbReference>
<dbReference type="GO" id="GO:0005344">
    <property type="term" value="F:oxygen carrier activity"/>
    <property type="evidence" value="ECO:0007669"/>
    <property type="project" value="UniProtKB-KW"/>
</dbReference>
<dbReference type="GO" id="GO:0004601">
    <property type="term" value="F:peroxidase activity"/>
    <property type="evidence" value="ECO:0007669"/>
    <property type="project" value="TreeGrafter"/>
</dbReference>
<dbReference type="GO" id="GO:0042744">
    <property type="term" value="P:hydrogen peroxide catabolic process"/>
    <property type="evidence" value="ECO:0007669"/>
    <property type="project" value="TreeGrafter"/>
</dbReference>
<dbReference type="CDD" id="cd08925">
    <property type="entry name" value="Hb-beta-like"/>
    <property type="match status" value="1"/>
</dbReference>
<dbReference type="FunFam" id="1.10.490.10:FF:000001">
    <property type="entry name" value="Hemoglobin subunit beta"/>
    <property type="match status" value="1"/>
</dbReference>
<dbReference type="Gene3D" id="1.10.490.10">
    <property type="entry name" value="Globins"/>
    <property type="match status" value="1"/>
</dbReference>
<dbReference type="InterPro" id="IPR000971">
    <property type="entry name" value="Globin"/>
</dbReference>
<dbReference type="InterPro" id="IPR009050">
    <property type="entry name" value="Globin-like_sf"/>
</dbReference>
<dbReference type="InterPro" id="IPR012292">
    <property type="entry name" value="Globin/Proto"/>
</dbReference>
<dbReference type="InterPro" id="IPR002337">
    <property type="entry name" value="Hemoglobin_b"/>
</dbReference>
<dbReference type="InterPro" id="IPR050056">
    <property type="entry name" value="Hemoglobin_oxygen_transport"/>
</dbReference>
<dbReference type="PANTHER" id="PTHR11442">
    <property type="entry name" value="HEMOGLOBIN FAMILY MEMBER"/>
    <property type="match status" value="1"/>
</dbReference>
<dbReference type="PANTHER" id="PTHR11442:SF42">
    <property type="entry name" value="HEMOGLOBIN SUBUNIT BETA"/>
    <property type="match status" value="1"/>
</dbReference>
<dbReference type="Pfam" id="PF00042">
    <property type="entry name" value="Globin"/>
    <property type="match status" value="1"/>
</dbReference>
<dbReference type="PRINTS" id="PR00814">
    <property type="entry name" value="BETAHAEM"/>
</dbReference>
<dbReference type="SUPFAM" id="SSF46458">
    <property type="entry name" value="Globin-like"/>
    <property type="match status" value="1"/>
</dbReference>
<dbReference type="PROSITE" id="PS01033">
    <property type="entry name" value="GLOBIN"/>
    <property type="match status" value="1"/>
</dbReference>
<gene>
    <name type="primary">HBB1</name>
</gene>
<gene>
    <name type="primary">HBB2</name>
</gene>
<accession>P02057</accession>
<proteinExistence type="evidence at protein level"/>
<feature type="initiator methionine" description="Removed" evidence="1">
    <location>
        <position position="1"/>
    </location>
</feature>
<feature type="chain" id="PRO_0000053085" description="Hemoglobin subunit beta-1/2">
    <location>
        <begin position="2"/>
        <end position="147"/>
    </location>
</feature>
<feature type="domain" description="Globin" evidence="3">
    <location>
        <begin position="3"/>
        <end position="147"/>
    </location>
</feature>
<feature type="binding site" description="distal binding residue">
    <location>
        <position position="64"/>
    </location>
    <ligand>
        <name>heme b</name>
        <dbReference type="ChEBI" id="CHEBI:60344"/>
    </ligand>
    <ligandPart>
        <name>Fe</name>
        <dbReference type="ChEBI" id="CHEBI:18248"/>
    </ligandPart>
</feature>
<feature type="binding site" description="proximal binding residue">
    <location>
        <position position="93"/>
    </location>
    <ligand>
        <name>heme b</name>
        <dbReference type="ChEBI" id="CHEBI:60344"/>
    </ligand>
    <ligandPart>
        <name>Fe</name>
        <dbReference type="ChEBI" id="CHEBI:18248"/>
    </ligandPart>
</feature>
<feature type="modified residue" description="N-acetylvaline" evidence="1">
    <location>
        <position position="2"/>
    </location>
</feature>
<feature type="modified residue" description="Phosphothreonine" evidence="2">
    <location>
        <position position="13"/>
    </location>
</feature>
<feature type="modified residue" description="Phosphoserine" evidence="2">
    <location>
        <position position="45"/>
    </location>
</feature>
<feature type="modified residue" description="N6-acetyllysine" evidence="2">
    <location>
        <position position="60"/>
    </location>
</feature>
<feature type="modified residue" description="N6-acetyllysine" evidence="2">
    <location>
        <position position="83"/>
    </location>
</feature>
<feature type="modified residue" description="S-nitrosocysteine" evidence="2">
    <location>
        <position position="94"/>
    </location>
</feature>
<feature type="modified residue" description="N6-acetyllysine" evidence="2">
    <location>
        <position position="145"/>
    </location>
</feature>
<feature type="sequence variant" description="In beta-2." evidence="4 5">
    <original>N</original>
    <variation>H</variation>
    <location>
        <position position="53"/>
    </location>
</feature>
<feature type="sequence variant" description="In beta-2." evidence="4 5">
    <original>N</original>
    <variation>S</variation>
    <location>
        <position position="57"/>
    </location>
</feature>
<feature type="sequence variant" description="In beta-2." evidence="4 5">
    <original>S</original>
    <variation>N</variation>
    <location>
        <position position="77"/>
    </location>
</feature>
<feature type="sequence variant" description="In beta-2." evidence="4 5">
    <original>I</original>
    <variation>V</variation>
    <location>
        <position position="113"/>
    </location>
</feature>
<feature type="helix" evidence="7">
    <location>
        <begin position="6"/>
        <end position="16"/>
    </location>
</feature>
<feature type="turn" evidence="7">
    <location>
        <begin position="21"/>
        <end position="23"/>
    </location>
</feature>
<feature type="helix" evidence="7">
    <location>
        <begin position="24"/>
        <end position="35"/>
    </location>
</feature>
<feature type="helix" evidence="7">
    <location>
        <begin position="37"/>
        <end position="46"/>
    </location>
</feature>
<feature type="helix" evidence="7">
    <location>
        <begin position="52"/>
        <end position="57"/>
    </location>
</feature>
<feature type="helix" evidence="7">
    <location>
        <begin position="59"/>
        <end position="76"/>
    </location>
</feature>
<feature type="helix" evidence="7">
    <location>
        <begin position="79"/>
        <end position="81"/>
    </location>
</feature>
<feature type="helix" evidence="7">
    <location>
        <begin position="82"/>
        <end position="85"/>
    </location>
</feature>
<feature type="helix" evidence="7">
    <location>
        <begin position="87"/>
        <end position="95"/>
    </location>
</feature>
<feature type="helix" evidence="7">
    <location>
        <begin position="102"/>
        <end position="119"/>
    </location>
</feature>
<feature type="helix" evidence="7">
    <location>
        <begin position="120"/>
        <end position="122"/>
    </location>
</feature>
<feature type="helix" evidence="7">
    <location>
        <begin position="125"/>
        <end position="142"/>
    </location>
</feature>
<feature type="turn" evidence="7">
    <location>
        <begin position="143"/>
        <end position="146"/>
    </location>
</feature>
<reference key="1">
    <citation type="journal article" date="1979" name="Science">
        <title>Comparison of total sequence of a cloned rabbit beta-globin gene and its flanking regions with a homologous mouse sequence.</title>
        <authorList>
            <person name="van Ooyen A."/>
            <person name="van den Berg J."/>
            <person name="Mantei N."/>
            <person name="Weissmann C."/>
        </authorList>
    </citation>
    <scope>NUCLEOTIDE SEQUENCE [GENOMIC DNA] (BETA-1)</scope>
</reference>
<reference key="2">
    <citation type="journal article" date="1977" name="Cell">
        <title>The primary structure of rabbit beta-globin mRNA as determined from cloned DNA.</title>
        <authorList>
            <person name="Efstratiadis A."/>
            <person name="Kafatos F.C."/>
            <person name="Maniatis T."/>
        </authorList>
    </citation>
    <scope>NUCLEOTIDE SEQUENCE [GENOMIC DNA] (BETA-1)</scope>
</reference>
<reference key="3">
    <citation type="journal article" date="1978" name="Cold Spring Harb. Symp. Quant. Biol.">
        <title>Studies on the structure of genes expressed during development.</title>
        <authorList>
            <person name="Sim G.K."/>
            <person name="Efstratiadis A."/>
            <person name="Jones C.W."/>
            <person name="Kafatos F.C."/>
            <person name="Koehler M."/>
            <person name="Kronenberg H.M."/>
            <person name="Maniatis T."/>
            <person name="Regier J.C."/>
            <person name="Roberts B.F."/>
            <person name="Rosenthal N."/>
        </authorList>
    </citation>
    <scope>NUCLEOTIDE SEQUENCE [MRNA] (BETA-1)</scope>
</reference>
<reference key="4">
    <citation type="journal article" date="1979" name="Cell">
        <title>The structure and transcription of four linked rabbit beta-like globin genes.</title>
        <authorList>
            <person name="Hardison R.C."/>
            <person name="Butler E.T. III"/>
            <person name="Lacy E."/>
            <person name="Maniatis T."/>
            <person name="Rosenthal N."/>
            <person name="Efstratiadis A."/>
        </authorList>
    </citation>
    <scope>NUCLEOTIDE SEQUENCE [GENOMIC DNA] (BETA-2)</scope>
</reference>
<reference key="5">
    <citation type="journal article" date="1989" name="J. Mol. Biol.">
        <title>Complete nucleotide sequence of the rabbit beta-like globin gene cluster. Analysis of intergenic sequences and comparison with the human beta-like globin gene cluster.</title>
        <authorList>
            <person name="Margot J.B."/>
            <person name="Demers G.W."/>
            <person name="Hardison R.C."/>
        </authorList>
    </citation>
    <scope>NUCLEOTIDE SEQUENCE (BETA-2)</scope>
</reference>
<reference key="6">
    <citation type="journal article" date="1980" name="Cell">
        <title>Secondary structure of mouse and rabbit alpha- and beta-globin mRNAs: differential accessibility of alpha and beta initiator AUG codons towards nucleases.</title>
        <authorList>
            <person name="Pavlakis G.N."/>
            <person name="Lockard R.E."/>
            <person name="Vamvakopoulos N."/>
            <person name="Rieser L."/>
            <person name="RajBhandary U.L."/>
            <person name="Vournakis J.N."/>
        </authorList>
    </citation>
    <scope>NUCLEOTIDE SEQUENCE [MRNA] OF 1-62 (BETA-1)</scope>
</reference>
<reference key="7">
    <citation type="journal article" date="1969" name="Hoppe-Seyler's Z. Physiol. Chem.">
        <title>Haemoglobins, XVII. The primary structure of the beta-chain of rabbit haemoglobin.</title>
        <authorList>
            <person name="Best J.S."/>
            <person name="Flamm U."/>
            <person name="Braunitzer G."/>
        </authorList>
    </citation>
    <scope>PROTEIN SEQUENCE OF 2-147 (BETA-1)</scope>
</reference>
<reference key="8">
    <citation type="journal article" date="1978" name="Nature">
        <title>Comparison of cloned rabbit and mouse beta-globin genes showing strong evolutionary divergence of two homologous pairs of introns.</title>
        <authorList>
            <person name="van den Berg J."/>
            <person name="van Ooyen A."/>
            <person name="Mantei N."/>
            <person name="Schamboeck A."/>
            <person name="Grosveld G."/>
            <person name="Flavell R.A."/>
            <person name="Weissmann C."/>
        </authorList>
    </citation>
    <scope>NUCLEOTIDE SEQUENCE [GENOMIC DNA] OF 100-115 (BETA-1)</scope>
</reference>
<reference key="9">
    <citation type="journal article" date="1974" name="Ann. N. Y. Acad. Sci.">
        <title>Genetic variation in the primary structure of the beta chain of rabbit hemoglobin.</title>
        <authorList>
            <person name="Garrick M.D."/>
            <person name="Hafner R."/>
            <person name="Bricker J."/>
            <person name="Garrick L.M."/>
        </authorList>
    </citation>
    <scope>OCCURRENCE AND FREQUENCY OF ALLELIC CHAINS</scope>
</reference>
<evidence type="ECO:0000250" key="1">
    <source>
        <dbReference type="UniProtKB" id="P02086"/>
    </source>
</evidence>
<evidence type="ECO:0000250" key="2">
    <source>
        <dbReference type="UniProtKB" id="P68871"/>
    </source>
</evidence>
<evidence type="ECO:0000255" key="3">
    <source>
        <dbReference type="PROSITE-ProRule" id="PRU00238"/>
    </source>
</evidence>
<evidence type="ECO:0000269" key="4">
    <source>
    </source>
</evidence>
<evidence type="ECO:0000269" key="5">
    <source>
    </source>
</evidence>
<evidence type="ECO:0000305" key="6">
    <source>
    </source>
</evidence>
<evidence type="ECO:0007829" key="7">
    <source>
        <dbReference type="PDB" id="2RAO"/>
    </source>
</evidence>
<protein>
    <recommendedName>
        <fullName>Hemoglobin subunit beta-1/2</fullName>
    </recommendedName>
    <alternativeName>
        <fullName>Beta-1/2-globin</fullName>
    </alternativeName>
    <alternativeName>
        <fullName>Hemoglobin beta-1/2 chain</fullName>
    </alternativeName>
</protein>